<reference key="1">
    <citation type="journal article" date="2008" name="J. Bacteriol.">
        <title>Comparative genome analysis of 'Candidatus Phytoplasma australiense' (subgroup tuf-Australia I; rp-A) and 'Ca. Phytoplasma asteris' strains OY-M and AY-WB.</title>
        <authorList>
            <person name="Tran-Nguyen L.T."/>
            <person name="Kube M."/>
            <person name="Schneider B."/>
            <person name="Reinhardt R."/>
            <person name="Gibb K.S."/>
        </authorList>
    </citation>
    <scope>NUCLEOTIDE SEQUENCE [LARGE SCALE GENOMIC DNA]</scope>
</reference>
<accession>B1VAC7</accession>
<feature type="chain" id="PRO_1000191161" description="Adenylate kinase">
    <location>
        <begin position="1"/>
        <end position="217"/>
    </location>
</feature>
<feature type="region of interest" description="NMP" evidence="1">
    <location>
        <begin position="30"/>
        <end position="59"/>
    </location>
</feature>
<feature type="region of interest" description="LID" evidence="1">
    <location>
        <begin position="126"/>
        <end position="163"/>
    </location>
</feature>
<feature type="binding site" evidence="1">
    <location>
        <begin position="10"/>
        <end position="15"/>
    </location>
    <ligand>
        <name>ATP</name>
        <dbReference type="ChEBI" id="CHEBI:30616"/>
    </ligand>
</feature>
<feature type="binding site" evidence="1">
    <location>
        <position position="31"/>
    </location>
    <ligand>
        <name>AMP</name>
        <dbReference type="ChEBI" id="CHEBI:456215"/>
    </ligand>
</feature>
<feature type="binding site" evidence="1">
    <location>
        <position position="36"/>
    </location>
    <ligand>
        <name>AMP</name>
        <dbReference type="ChEBI" id="CHEBI:456215"/>
    </ligand>
</feature>
<feature type="binding site" evidence="1">
    <location>
        <begin position="57"/>
        <end position="59"/>
    </location>
    <ligand>
        <name>AMP</name>
        <dbReference type="ChEBI" id="CHEBI:456215"/>
    </ligand>
</feature>
<feature type="binding site" evidence="1">
    <location>
        <begin position="85"/>
        <end position="88"/>
    </location>
    <ligand>
        <name>AMP</name>
        <dbReference type="ChEBI" id="CHEBI:456215"/>
    </ligand>
</feature>
<feature type="binding site" evidence="1">
    <location>
        <position position="92"/>
    </location>
    <ligand>
        <name>AMP</name>
        <dbReference type="ChEBI" id="CHEBI:456215"/>
    </ligand>
</feature>
<feature type="binding site" evidence="1">
    <location>
        <position position="127"/>
    </location>
    <ligand>
        <name>ATP</name>
        <dbReference type="ChEBI" id="CHEBI:30616"/>
    </ligand>
</feature>
<feature type="binding site" evidence="1">
    <location>
        <position position="130"/>
    </location>
    <ligand>
        <name>Zn(2+)</name>
        <dbReference type="ChEBI" id="CHEBI:29105"/>
        <note>structural</note>
    </ligand>
</feature>
<feature type="binding site" evidence="1">
    <location>
        <position position="133"/>
    </location>
    <ligand>
        <name>Zn(2+)</name>
        <dbReference type="ChEBI" id="CHEBI:29105"/>
        <note>structural</note>
    </ligand>
</feature>
<feature type="binding site" evidence="1">
    <location>
        <begin position="136"/>
        <end position="137"/>
    </location>
    <ligand>
        <name>ATP</name>
        <dbReference type="ChEBI" id="CHEBI:30616"/>
    </ligand>
</feature>
<feature type="binding site" evidence="1">
    <location>
        <position position="150"/>
    </location>
    <ligand>
        <name>Zn(2+)</name>
        <dbReference type="ChEBI" id="CHEBI:29105"/>
        <note>structural</note>
    </ligand>
</feature>
<feature type="binding site" evidence="1">
    <location>
        <position position="153"/>
    </location>
    <ligand>
        <name>Zn(2+)</name>
        <dbReference type="ChEBI" id="CHEBI:29105"/>
        <note>structural</note>
    </ligand>
</feature>
<feature type="binding site" evidence="1">
    <location>
        <position position="160"/>
    </location>
    <ligand>
        <name>AMP</name>
        <dbReference type="ChEBI" id="CHEBI:456215"/>
    </ligand>
</feature>
<feature type="binding site" evidence="1">
    <location>
        <position position="171"/>
    </location>
    <ligand>
        <name>AMP</name>
        <dbReference type="ChEBI" id="CHEBI:456215"/>
    </ligand>
</feature>
<feature type="binding site" evidence="1">
    <location>
        <position position="199"/>
    </location>
    <ligand>
        <name>ATP</name>
        <dbReference type="ChEBI" id="CHEBI:30616"/>
    </ligand>
</feature>
<protein>
    <recommendedName>
        <fullName evidence="1">Adenylate kinase</fullName>
        <shortName evidence="1">AK</shortName>
        <ecNumber evidence="1">2.7.4.3</ecNumber>
    </recommendedName>
    <alternativeName>
        <fullName evidence="1">ATP-AMP transphosphorylase</fullName>
    </alternativeName>
    <alternativeName>
        <fullName evidence="1">ATP:AMP phosphotransferase</fullName>
    </alternativeName>
    <alternativeName>
        <fullName evidence="1">Adenylate monophosphate kinase</fullName>
    </alternativeName>
</protein>
<evidence type="ECO:0000255" key="1">
    <source>
        <dbReference type="HAMAP-Rule" id="MF_00235"/>
    </source>
</evidence>
<name>KAD_PHYAS</name>
<organism>
    <name type="scientific">Phytoplasma australiense</name>
    <dbReference type="NCBI Taxonomy" id="59748"/>
    <lineage>
        <taxon>Bacteria</taxon>
        <taxon>Bacillati</taxon>
        <taxon>Mycoplasmatota</taxon>
        <taxon>Mollicutes</taxon>
        <taxon>Acholeplasmatales</taxon>
        <taxon>Acholeplasmataceae</taxon>
        <taxon>Candidatus Phytoplasma</taxon>
        <taxon>16SrXII (Stolbur group)</taxon>
    </lineage>
</organism>
<keyword id="KW-0067">ATP-binding</keyword>
<keyword id="KW-0963">Cytoplasm</keyword>
<keyword id="KW-0418">Kinase</keyword>
<keyword id="KW-0479">Metal-binding</keyword>
<keyword id="KW-0545">Nucleotide biosynthesis</keyword>
<keyword id="KW-0547">Nucleotide-binding</keyword>
<keyword id="KW-1185">Reference proteome</keyword>
<keyword id="KW-0808">Transferase</keyword>
<keyword id="KW-0862">Zinc</keyword>
<comment type="function">
    <text evidence="1">Catalyzes the reversible transfer of the terminal phosphate group between ATP and AMP. Plays an important role in cellular energy homeostasis and in adenine nucleotide metabolism.</text>
</comment>
<comment type="catalytic activity">
    <reaction evidence="1">
        <text>AMP + ATP = 2 ADP</text>
        <dbReference type="Rhea" id="RHEA:12973"/>
        <dbReference type="ChEBI" id="CHEBI:30616"/>
        <dbReference type="ChEBI" id="CHEBI:456215"/>
        <dbReference type="ChEBI" id="CHEBI:456216"/>
        <dbReference type="EC" id="2.7.4.3"/>
    </reaction>
</comment>
<comment type="pathway">
    <text evidence="1">Purine metabolism; AMP biosynthesis via salvage pathway; AMP from ADP: step 1/1.</text>
</comment>
<comment type="subunit">
    <text evidence="1">Monomer.</text>
</comment>
<comment type="subcellular location">
    <subcellularLocation>
        <location evidence="1">Cytoplasm</location>
    </subcellularLocation>
</comment>
<comment type="domain">
    <text evidence="1">Consists of three domains, a large central CORE domain and two small peripheral domains, NMPbind and LID, which undergo movements during catalysis. The LID domain closes over the site of phosphoryl transfer upon ATP binding. Assembling and dissambling the active center during each catalytic cycle provides an effective means to prevent ATP hydrolysis. Some bacteria have evolved a zinc-coordinating structure that stabilizes the LID domain.</text>
</comment>
<comment type="similarity">
    <text evidence="1">Belongs to the adenylate kinase family.</text>
</comment>
<dbReference type="EC" id="2.7.4.3" evidence="1"/>
<dbReference type="EMBL" id="AM422018">
    <property type="protein sequence ID" value="CAM11900.1"/>
    <property type="molecule type" value="Genomic_DNA"/>
</dbReference>
<dbReference type="SMR" id="B1VAC7"/>
<dbReference type="STRING" id="59748.PA0566"/>
<dbReference type="KEGG" id="pal:PA0566"/>
<dbReference type="eggNOG" id="COG0563">
    <property type="taxonomic scope" value="Bacteria"/>
</dbReference>
<dbReference type="UniPathway" id="UPA00588">
    <property type="reaction ID" value="UER00649"/>
</dbReference>
<dbReference type="Proteomes" id="UP000008323">
    <property type="component" value="Chromosome"/>
</dbReference>
<dbReference type="GO" id="GO:0005737">
    <property type="term" value="C:cytoplasm"/>
    <property type="evidence" value="ECO:0007669"/>
    <property type="project" value="UniProtKB-SubCell"/>
</dbReference>
<dbReference type="GO" id="GO:0004017">
    <property type="term" value="F:adenylate kinase activity"/>
    <property type="evidence" value="ECO:0007669"/>
    <property type="project" value="UniProtKB-UniRule"/>
</dbReference>
<dbReference type="GO" id="GO:0005524">
    <property type="term" value="F:ATP binding"/>
    <property type="evidence" value="ECO:0007669"/>
    <property type="project" value="UniProtKB-UniRule"/>
</dbReference>
<dbReference type="GO" id="GO:0008270">
    <property type="term" value="F:zinc ion binding"/>
    <property type="evidence" value="ECO:0007669"/>
    <property type="project" value="UniProtKB-UniRule"/>
</dbReference>
<dbReference type="GO" id="GO:0044209">
    <property type="term" value="P:AMP salvage"/>
    <property type="evidence" value="ECO:0007669"/>
    <property type="project" value="UniProtKB-UniRule"/>
</dbReference>
<dbReference type="CDD" id="cd01428">
    <property type="entry name" value="ADK"/>
    <property type="match status" value="1"/>
</dbReference>
<dbReference type="FunFam" id="3.40.50.300:FF:000106">
    <property type="entry name" value="Adenylate kinase mitochondrial"/>
    <property type="match status" value="1"/>
</dbReference>
<dbReference type="Gene3D" id="3.40.50.300">
    <property type="entry name" value="P-loop containing nucleotide triphosphate hydrolases"/>
    <property type="match status" value="1"/>
</dbReference>
<dbReference type="HAMAP" id="MF_00235">
    <property type="entry name" value="Adenylate_kinase_Adk"/>
    <property type="match status" value="1"/>
</dbReference>
<dbReference type="InterPro" id="IPR006259">
    <property type="entry name" value="Adenyl_kin_sub"/>
</dbReference>
<dbReference type="InterPro" id="IPR000850">
    <property type="entry name" value="Adenylat/UMP-CMP_kin"/>
</dbReference>
<dbReference type="InterPro" id="IPR033690">
    <property type="entry name" value="Adenylat_kinase_CS"/>
</dbReference>
<dbReference type="InterPro" id="IPR007862">
    <property type="entry name" value="Adenylate_kinase_lid-dom"/>
</dbReference>
<dbReference type="InterPro" id="IPR027417">
    <property type="entry name" value="P-loop_NTPase"/>
</dbReference>
<dbReference type="NCBIfam" id="TIGR01351">
    <property type="entry name" value="adk"/>
    <property type="match status" value="1"/>
</dbReference>
<dbReference type="NCBIfam" id="NF001380">
    <property type="entry name" value="PRK00279.1-2"/>
    <property type="match status" value="1"/>
</dbReference>
<dbReference type="NCBIfam" id="NF001381">
    <property type="entry name" value="PRK00279.1-3"/>
    <property type="match status" value="1"/>
</dbReference>
<dbReference type="PANTHER" id="PTHR23359">
    <property type="entry name" value="NUCLEOTIDE KINASE"/>
    <property type="match status" value="1"/>
</dbReference>
<dbReference type="Pfam" id="PF00406">
    <property type="entry name" value="ADK"/>
    <property type="match status" value="1"/>
</dbReference>
<dbReference type="Pfam" id="PF05191">
    <property type="entry name" value="ADK_lid"/>
    <property type="match status" value="1"/>
</dbReference>
<dbReference type="PRINTS" id="PR00094">
    <property type="entry name" value="ADENYLTKNASE"/>
</dbReference>
<dbReference type="SUPFAM" id="SSF52540">
    <property type="entry name" value="P-loop containing nucleoside triphosphate hydrolases"/>
    <property type="match status" value="1"/>
</dbReference>
<dbReference type="PROSITE" id="PS00113">
    <property type="entry name" value="ADENYLATE_KINASE"/>
    <property type="match status" value="1"/>
</dbReference>
<proteinExistence type="inferred from homology"/>
<sequence length="217" mass="25130">MILILLGPPGIGKGTQAAVLSDLLKLQHVATGDIFRKNFQENTPLGKESKKFINKGLLVPDEITNQMIADYLSQIVPHSNFLLDGFPRNVFQAQFLETFFTKSNLHLNKVIYFNAFKQDLMKRIEGRRICSHCGKVYHLDNLPPKIEGICDKDQKKLIQREDDKPNTFLKRLKVFNQETLHLVEYYRSKKQLFEVDGMQNIQQVTQKILKVLETEQK</sequence>
<gene>
    <name evidence="1" type="primary">adk</name>
    <name type="ordered locus">PA0566</name>
</gene>